<keyword id="KW-1204">Blood coagulation cascade activating toxin</keyword>
<keyword id="KW-0903">Direct protein sequencing</keyword>
<keyword id="KW-0325">Glycoprotein</keyword>
<keyword id="KW-1199">Hemostasis impairing toxin</keyword>
<keyword id="KW-0378">Hydrolase</keyword>
<keyword id="KW-1202">Platelet aggregation activating toxin</keyword>
<keyword id="KW-0645">Protease</keyword>
<keyword id="KW-0964">Secreted</keyword>
<keyword id="KW-0720">Serine protease</keyword>
<keyword id="KW-0800">Toxin</keyword>
<reference key="1">
    <citation type="journal article" date="1997" name="Eur. J. Biochem.">
        <title>Cerastotin, a serine protease from Cerastes cerastes venom, with platelet-aggregating and agglutinating properties.</title>
        <authorList>
            <person name="Marrakchi N."/>
            <person name="Barbouche R."/>
            <person name="Guermazi S."/>
            <person name="Karoui H."/>
            <person name="Bon C."/>
            <person name="el Ayeb M."/>
        </authorList>
    </citation>
    <scope>PROTEIN SEQUENCE</scope>
    <scope>FUNCTION</scope>
    <scope>ACTIVITY REGULATION</scope>
    <scope>SUBUNIT</scope>
    <source>
        <tissue>Venom</tissue>
    </source>
</reference>
<accession>P81038</accession>
<proteinExistence type="evidence at protein level"/>
<evidence type="ECO:0000250" key="1"/>
<evidence type="ECO:0000255" key="2"/>
<evidence type="ECO:0000255" key="3">
    <source>
        <dbReference type="PROSITE-ProRule" id="PRU00274"/>
    </source>
</evidence>
<evidence type="ECO:0000269" key="4">
    <source>
    </source>
</evidence>
<feature type="chain" id="PRO_0000088736" description="Thrombin-like enzyme cerastotin">
    <location>
        <begin position="1"/>
        <end position="98" status="greater than"/>
    </location>
</feature>
<feature type="domain" description="Peptidase S1" evidence="3">
    <location>
        <begin position="1"/>
        <end position="98" status="greater than"/>
    </location>
</feature>
<feature type="active site" description="Charge relay system" evidence="1">
    <location>
        <position position="41"/>
    </location>
</feature>
<feature type="active site" description="Charge relay system" evidence="1">
    <location>
        <position position="85"/>
    </location>
</feature>
<feature type="glycosylation site" description="N-linked (GlcNAc...) asparagine" evidence="2">
    <location>
        <position position="94"/>
    </location>
</feature>
<feature type="non-terminal residue">
    <location>
        <position position="98"/>
    </location>
</feature>
<comment type="function">
    <text evidence="4">Thrombin-like snake venom serine protease that preferentially cleaves the alpha-chain of fibrinogen (FGA). Induce platelet aggregation in the presence of exogenous fibrinogen. Possesses esterase and amidolytic activities.</text>
</comment>
<comment type="activity regulation">
    <text evidence="4">Inhibited by PMSF.</text>
</comment>
<comment type="subunit">
    <text evidence="4">Monomer.</text>
</comment>
<comment type="subcellular location">
    <subcellularLocation>
        <location>Secreted</location>
    </subcellularLocation>
</comment>
<comment type="tissue specificity">
    <text>Expressed by the venom gland.</text>
</comment>
<comment type="similarity">
    <text evidence="3">Belongs to the peptidase S1 family. Snake venom subfamily.</text>
</comment>
<organism>
    <name type="scientific">Cerastes cerastes</name>
    <name type="common">Horned desert viper</name>
    <dbReference type="NCBI Taxonomy" id="8697"/>
    <lineage>
        <taxon>Eukaryota</taxon>
        <taxon>Metazoa</taxon>
        <taxon>Chordata</taxon>
        <taxon>Craniata</taxon>
        <taxon>Vertebrata</taxon>
        <taxon>Euteleostomi</taxon>
        <taxon>Lepidosauria</taxon>
        <taxon>Squamata</taxon>
        <taxon>Bifurcata</taxon>
        <taxon>Unidentata</taxon>
        <taxon>Episquamata</taxon>
        <taxon>Toxicofera</taxon>
        <taxon>Serpentes</taxon>
        <taxon>Colubroidea</taxon>
        <taxon>Viperidae</taxon>
        <taxon>Viperinae</taxon>
        <taxon>Cerastes</taxon>
    </lineage>
</organism>
<sequence length="98" mass="11168">VIGGAECNINEHRSLVLLYYSSRLFGGGTLINKEWVLSAAHCDGENMKIIYXXXXXXXXXXKDRQIRVAKKYFCRDRKKSVIDKDIMLIKKPVNGSTH</sequence>
<name>VSPA_CERCE</name>
<protein>
    <recommendedName>
        <fullName>Thrombin-like enzyme cerastotin</fullName>
        <shortName>SVTLE</shortName>
        <ecNumber>3.4.21.-</ecNumber>
    </recommendedName>
    <alternativeName>
        <fullName>Fibrinogen-clotting enzyme</fullName>
    </alternativeName>
    <alternativeName>
        <fullName>Snake venom serine protease</fullName>
        <shortName>SVSP</shortName>
    </alternativeName>
</protein>
<dbReference type="EC" id="3.4.21.-"/>
<dbReference type="GO" id="GO:0005615">
    <property type="term" value="C:extracellular space"/>
    <property type="evidence" value="ECO:0007669"/>
    <property type="project" value="TreeGrafter"/>
</dbReference>
<dbReference type="GO" id="GO:0004252">
    <property type="term" value="F:serine-type endopeptidase activity"/>
    <property type="evidence" value="ECO:0007669"/>
    <property type="project" value="InterPro"/>
</dbReference>
<dbReference type="GO" id="GO:0090729">
    <property type="term" value="F:toxin activity"/>
    <property type="evidence" value="ECO:0007669"/>
    <property type="project" value="UniProtKB-KW"/>
</dbReference>
<dbReference type="GO" id="GO:0006508">
    <property type="term" value="P:proteolysis"/>
    <property type="evidence" value="ECO:0007669"/>
    <property type="project" value="UniProtKB-KW"/>
</dbReference>
<dbReference type="Gene3D" id="2.40.10.10">
    <property type="entry name" value="Trypsin-like serine proteases"/>
    <property type="match status" value="2"/>
</dbReference>
<dbReference type="InterPro" id="IPR009003">
    <property type="entry name" value="Peptidase_S1_PA"/>
</dbReference>
<dbReference type="InterPro" id="IPR043504">
    <property type="entry name" value="Peptidase_S1_PA_chymotrypsin"/>
</dbReference>
<dbReference type="InterPro" id="IPR001314">
    <property type="entry name" value="Peptidase_S1A"/>
</dbReference>
<dbReference type="InterPro" id="IPR050127">
    <property type="entry name" value="Serine_Proteases_S1"/>
</dbReference>
<dbReference type="InterPro" id="IPR001254">
    <property type="entry name" value="Trypsin_dom"/>
</dbReference>
<dbReference type="InterPro" id="IPR018114">
    <property type="entry name" value="TRYPSIN_HIS"/>
</dbReference>
<dbReference type="PANTHER" id="PTHR24264:SF65">
    <property type="entry name" value="SRCR DOMAIN-CONTAINING PROTEIN"/>
    <property type="match status" value="1"/>
</dbReference>
<dbReference type="PANTHER" id="PTHR24264">
    <property type="entry name" value="TRYPSIN-RELATED"/>
    <property type="match status" value="1"/>
</dbReference>
<dbReference type="Pfam" id="PF00089">
    <property type="entry name" value="Trypsin"/>
    <property type="match status" value="1"/>
</dbReference>
<dbReference type="PRINTS" id="PR00722">
    <property type="entry name" value="CHYMOTRYPSIN"/>
</dbReference>
<dbReference type="SUPFAM" id="SSF50494">
    <property type="entry name" value="Trypsin-like serine proteases"/>
    <property type="match status" value="1"/>
</dbReference>
<dbReference type="PROSITE" id="PS00134">
    <property type="entry name" value="TRYPSIN_HIS"/>
    <property type="match status" value="1"/>
</dbReference>